<accession>Q6DKI2</accession>
<accession>B0AZM7</accession>
<evidence type="ECO:0000250" key="1"/>
<evidence type="ECO:0000255" key="2">
    <source>
        <dbReference type="PROSITE-ProRule" id="PRU00639"/>
    </source>
</evidence>
<evidence type="ECO:0000256" key="3">
    <source>
        <dbReference type="SAM" id="MobiDB-lite"/>
    </source>
</evidence>
<evidence type="ECO:0000269" key="4">
    <source>
    </source>
</evidence>
<evidence type="ECO:0000305" key="5"/>
<dbReference type="EMBL" id="AK315818">
    <property type="protein sequence ID" value="BAF98709.1"/>
    <property type="molecule type" value="mRNA"/>
</dbReference>
<dbReference type="EMBL" id="AC107983">
    <property type="status" value="NOT_ANNOTATED_CDS"/>
    <property type="molecule type" value="Genomic_DNA"/>
</dbReference>
<dbReference type="EMBL" id="AL353997">
    <property type="status" value="NOT_ANNOTATED_CDS"/>
    <property type="molecule type" value="Genomic_DNA"/>
</dbReference>
<dbReference type="EMBL" id="BC073889">
    <property type="protein sequence ID" value="AAH73889.1"/>
    <property type="molecule type" value="mRNA"/>
</dbReference>
<dbReference type="CCDS" id="CCDS32587.1"/>
<dbReference type="RefSeq" id="NP_001035167.2">
    <property type="nucleotide sequence ID" value="NM_001040078.3"/>
</dbReference>
<dbReference type="SMR" id="Q6DKI2"/>
<dbReference type="BioGRID" id="576335">
    <property type="interactions" value="35"/>
</dbReference>
<dbReference type="FunCoup" id="Q6DKI2">
    <property type="interactions" value="201"/>
</dbReference>
<dbReference type="IntAct" id="Q6DKI2">
    <property type="interactions" value="55"/>
</dbReference>
<dbReference type="STRING" id="9606.ENSP00000329932"/>
<dbReference type="iPTMnet" id="Q6DKI2"/>
<dbReference type="PhosphoSitePlus" id="Q6DKI2"/>
<dbReference type="BioMuta" id="LGALS9C"/>
<dbReference type="DMDM" id="296434563"/>
<dbReference type="jPOST" id="Q6DKI2"/>
<dbReference type="MassIVE" id="Q6DKI2"/>
<dbReference type="PaxDb" id="9606-ENSP00000329932"/>
<dbReference type="PeptideAtlas" id="Q6DKI2"/>
<dbReference type="ProteomicsDB" id="66231"/>
<dbReference type="Antibodypedia" id="67999">
    <property type="antibodies" value="71 antibodies from 13 providers"/>
</dbReference>
<dbReference type="DNASU" id="654346"/>
<dbReference type="Ensembl" id="ENST00000328114.11">
    <property type="protein sequence ID" value="ENSP00000329932.6"/>
    <property type="gene ID" value="ENSG00000171916.17"/>
</dbReference>
<dbReference type="Ensembl" id="ENST00000639265.2">
    <property type="protein sequence ID" value="ENSP00000491587.1"/>
    <property type="gene ID" value="ENSG00000284021.2"/>
</dbReference>
<dbReference type="GeneID" id="654346"/>
<dbReference type="KEGG" id="hsa:654346"/>
<dbReference type="MANE-Select" id="ENST00000328114.11">
    <property type="protein sequence ID" value="ENSP00000329932.6"/>
    <property type="RefSeq nucleotide sequence ID" value="NM_001040078.3"/>
    <property type="RefSeq protein sequence ID" value="NP_001035167.2"/>
</dbReference>
<dbReference type="UCSC" id="uc002gtw.4">
    <property type="organism name" value="human"/>
</dbReference>
<dbReference type="AGR" id="HGNC:33874"/>
<dbReference type="CTD" id="654346"/>
<dbReference type="GeneCards" id="LGALS9C"/>
<dbReference type="HGNC" id="HGNC:33874">
    <property type="gene designation" value="LGALS9C"/>
</dbReference>
<dbReference type="HPA" id="ENSG00000171916">
    <property type="expression patterns" value="Tissue enhanced (esophagus, intestine, stomach)"/>
</dbReference>
<dbReference type="neXtProt" id="NX_Q6DKI2"/>
<dbReference type="OpenTargets" id="ENSG00000171916"/>
<dbReference type="PharmGKB" id="PA162393930"/>
<dbReference type="VEuPathDB" id="HostDB:ENSG00000171916"/>
<dbReference type="eggNOG" id="KOG3587">
    <property type="taxonomic scope" value="Eukaryota"/>
</dbReference>
<dbReference type="GeneTree" id="ENSGT00940000162701"/>
<dbReference type="InParanoid" id="Q6DKI2"/>
<dbReference type="OMA" id="PRFDEKH"/>
<dbReference type="OrthoDB" id="5795596at2759"/>
<dbReference type="PAN-GO" id="Q6DKI2">
    <property type="GO annotations" value="7 GO annotations based on evolutionary models"/>
</dbReference>
<dbReference type="PhylomeDB" id="Q6DKI2"/>
<dbReference type="TreeFam" id="TF315551"/>
<dbReference type="PathwayCommons" id="Q6DKI2"/>
<dbReference type="SignaLink" id="Q6DKI2"/>
<dbReference type="BioGRID-ORCS" id="654346">
    <property type="hits" value="115 hits in 1046 CRISPR screens"/>
</dbReference>
<dbReference type="GenomeRNAi" id="654346"/>
<dbReference type="Pharos" id="Q6DKI2">
    <property type="development level" value="Tdark"/>
</dbReference>
<dbReference type="PRO" id="PR:Q6DKI2"/>
<dbReference type="Proteomes" id="UP000005640">
    <property type="component" value="Chromosome 17"/>
</dbReference>
<dbReference type="RNAct" id="Q6DKI2">
    <property type="molecule type" value="protein"/>
</dbReference>
<dbReference type="Bgee" id="ENSG00000171916">
    <property type="expression patterns" value="Expressed in rectum and 86 other cell types or tissues"/>
</dbReference>
<dbReference type="ExpressionAtlas" id="Q6DKI2">
    <property type="expression patterns" value="baseline and differential"/>
</dbReference>
<dbReference type="GO" id="GO:0005829">
    <property type="term" value="C:cytosol"/>
    <property type="evidence" value="ECO:0000314"/>
    <property type="project" value="HPA"/>
</dbReference>
<dbReference type="GO" id="GO:0005634">
    <property type="term" value="C:nucleus"/>
    <property type="evidence" value="ECO:0000318"/>
    <property type="project" value="GO_Central"/>
</dbReference>
<dbReference type="GO" id="GO:0030246">
    <property type="term" value="F:carbohydrate binding"/>
    <property type="evidence" value="ECO:0000318"/>
    <property type="project" value="GO_Central"/>
</dbReference>
<dbReference type="GO" id="GO:0016936">
    <property type="term" value="F:galactoside binding"/>
    <property type="evidence" value="ECO:0000318"/>
    <property type="project" value="GO_Central"/>
</dbReference>
<dbReference type="GO" id="GO:2000562">
    <property type="term" value="P:negative regulation of CD4-positive, alpha-beta T cell proliferation"/>
    <property type="evidence" value="ECO:0000318"/>
    <property type="project" value="GO_Central"/>
</dbReference>
<dbReference type="GO" id="GO:0032689">
    <property type="term" value="P:negative regulation of type II interferon production"/>
    <property type="evidence" value="ECO:0000318"/>
    <property type="project" value="GO_Central"/>
</dbReference>
<dbReference type="GO" id="GO:0010628">
    <property type="term" value="P:positive regulation of gene expression"/>
    <property type="evidence" value="ECO:0000318"/>
    <property type="project" value="GO_Central"/>
</dbReference>
<dbReference type="CDD" id="cd00070">
    <property type="entry name" value="GLECT"/>
    <property type="match status" value="2"/>
</dbReference>
<dbReference type="FunFam" id="2.60.120.200:FF:000023">
    <property type="entry name" value="Galectin"/>
    <property type="match status" value="1"/>
</dbReference>
<dbReference type="FunFam" id="2.60.120.200:FF:000078">
    <property type="entry name" value="Galectin"/>
    <property type="match status" value="1"/>
</dbReference>
<dbReference type="Gene3D" id="2.60.120.200">
    <property type="match status" value="2"/>
</dbReference>
<dbReference type="InterPro" id="IPR013320">
    <property type="entry name" value="ConA-like_dom_sf"/>
</dbReference>
<dbReference type="InterPro" id="IPR044156">
    <property type="entry name" value="Galectin-like"/>
</dbReference>
<dbReference type="InterPro" id="IPR001079">
    <property type="entry name" value="Galectin_CRD"/>
</dbReference>
<dbReference type="PANTHER" id="PTHR11346">
    <property type="entry name" value="GALECTIN"/>
    <property type="match status" value="1"/>
</dbReference>
<dbReference type="PANTHER" id="PTHR11346:SF80">
    <property type="entry name" value="GALECTIN-9C"/>
    <property type="match status" value="1"/>
</dbReference>
<dbReference type="Pfam" id="PF00337">
    <property type="entry name" value="Gal-bind_lectin"/>
    <property type="match status" value="2"/>
</dbReference>
<dbReference type="SMART" id="SM00908">
    <property type="entry name" value="Gal-bind_lectin"/>
    <property type="match status" value="2"/>
</dbReference>
<dbReference type="SMART" id="SM00276">
    <property type="entry name" value="GLECT"/>
    <property type="match status" value="2"/>
</dbReference>
<dbReference type="SUPFAM" id="SSF49899">
    <property type="entry name" value="Concanavalin A-like lectins/glucanases"/>
    <property type="match status" value="2"/>
</dbReference>
<dbReference type="PROSITE" id="PS51304">
    <property type="entry name" value="GALECTIN"/>
    <property type="match status" value="2"/>
</dbReference>
<comment type="function">
    <text evidence="1">Binds galactosides.</text>
</comment>
<comment type="interaction">
    <interactant intactId="EBI-9088829">
        <id>Q6DKI2</id>
    </interactant>
    <interactant intactId="EBI-11954292">
        <id>Q86V38</id>
        <label>ATN1</label>
    </interactant>
    <organismsDiffer>false</organismsDiffer>
    <experiments>3</experiments>
</comment>
<comment type="interaction">
    <interactant intactId="EBI-9088829">
        <id>Q6DKI2</id>
    </interactant>
    <interactant intactId="EBI-930964">
        <id>P54253</id>
        <label>ATXN1</label>
    </interactant>
    <organismsDiffer>false</organismsDiffer>
    <experiments>6</experiments>
</comment>
<comment type="interaction">
    <interactant intactId="EBI-9088829">
        <id>Q6DKI2</id>
    </interactant>
    <interactant intactId="EBI-11282723">
        <id>Q9Y5Z0</id>
        <label>BACE2</label>
    </interactant>
    <organismsDiffer>false</organismsDiffer>
    <experiments>3</experiments>
</comment>
<comment type="interaction">
    <interactant intactId="EBI-9088829">
        <id>Q6DKI2</id>
    </interactant>
    <interactant intactId="EBI-10988864">
        <id>P46379-2</id>
        <label>BAG6</label>
    </interactant>
    <organismsDiffer>false</organismsDiffer>
    <experiments>3</experiments>
</comment>
<comment type="interaction">
    <interactant intactId="EBI-9088829">
        <id>Q6DKI2</id>
    </interactant>
    <interactant intactId="EBI-718729">
        <id>P55212</id>
        <label>CASP6</label>
    </interactant>
    <organismsDiffer>false</organismsDiffer>
    <experiments>3</experiments>
</comment>
<comment type="interaction">
    <interactant intactId="EBI-9088829">
        <id>Q6DKI2</id>
    </interactant>
    <interactant intactId="EBI-6624398">
        <id>P06307</id>
        <label>CCK</label>
    </interactant>
    <organismsDiffer>false</organismsDiffer>
    <experiments>3</experiments>
</comment>
<comment type="interaction">
    <interactant intactId="EBI-9088829">
        <id>Q6DKI2</id>
    </interactant>
    <interactant intactId="EBI-6875961">
        <id>P02489</id>
        <label>CRYAA</label>
    </interactant>
    <organismsDiffer>false</organismsDiffer>
    <experiments>3</experiments>
</comment>
<comment type="interaction">
    <interactant intactId="EBI-9088829">
        <id>Q6DKI2</id>
    </interactant>
    <interactant intactId="EBI-3867333">
        <id>A8MQ03</id>
        <label>CYSRT1</label>
    </interactant>
    <organismsDiffer>false</organismsDiffer>
    <experiments>3</experiments>
</comment>
<comment type="interaction">
    <interactant intactId="EBI-9088829">
        <id>Q6DKI2</id>
    </interactant>
    <interactant intactId="EBI-7875264">
        <id>O75553</id>
        <label>DAB1</label>
    </interactant>
    <organismsDiffer>false</organismsDiffer>
    <experiments>3</experiments>
</comment>
<comment type="interaction">
    <interactant intactId="EBI-9088829">
        <id>Q6DKI2</id>
    </interactant>
    <interactant intactId="EBI-395638">
        <id>O14645</id>
        <label>DNALI1</label>
    </interactant>
    <organismsDiffer>false</organismsDiffer>
    <experiments>3</experiments>
</comment>
<comment type="interaction">
    <interactant intactId="EBI-9088829">
        <id>Q6DKI2</id>
    </interactant>
    <interactant intactId="EBI-10968534">
        <id>P50570-2</id>
        <label>DNM2</label>
    </interactant>
    <organismsDiffer>false</organismsDiffer>
    <experiments>3</experiments>
</comment>
<comment type="interaction">
    <interactant intactId="EBI-9088829">
        <id>Q6DKI2</id>
    </interactant>
    <interactant intactId="EBI-356015">
        <id>Q14204</id>
        <label>DYNC1H1</label>
    </interactant>
    <organismsDiffer>false</organismsDiffer>
    <experiments>3</experiments>
</comment>
<comment type="interaction">
    <interactant intactId="EBI-9088829">
        <id>Q6DKI2</id>
    </interactant>
    <interactant intactId="EBI-2565863">
        <id>P00488</id>
        <label>F13A1</label>
    </interactant>
    <organismsDiffer>false</organismsDiffer>
    <experiments>3</experiments>
</comment>
<comment type="interaction">
    <interactant intactId="EBI-9088829">
        <id>Q6DKI2</id>
    </interactant>
    <interactant intactId="EBI-744302">
        <id>P14136</id>
        <label>GFAP</label>
    </interactant>
    <organismsDiffer>false</organismsDiffer>
    <experiments>3</experiments>
</comment>
<comment type="interaction">
    <interactant intactId="EBI-9088829">
        <id>Q6DKI2</id>
    </interactant>
    <interactant intactId="EBI-1055254">
        <id>Q8WXH2</id>
        <label>JPH3</label>
    </interactant>
    <organismsDiffer>false</organismsDiffer>
    <experiments>3</experiments>
</comment>
<comment type="interaction">
    <interactant intactId="EBI-9088829">
        <id>Q6DKI2</id>
    </interactant>
    <interactant intactId="EBI-948266">
        <id>O14901</id>
        <label>KLF11</label>
    </interactant>
    <organismsDiffer>false</organismsDiffer>
    <experiments>3</experiments>
</comment>
<comment type="interaction">
    <interactant intactId="EBI-9088829">
        <id>Q6DKI2</id>
    </interactant>
    <interactant intactId="EBI-2432309">
        <id>Q92876</id>
        <label>KLK6</label>
    </interactant>
    <organismsDiffer>false</organismsDiffer>
    <experiments>3</experiments>
</comment>
<comment type="interaction">
    <interactant intactId="EBI-9088829">
        <id>Q6DKI2</id>
    </interactant>
    <interactant intactId="EBI-11962084">
        <id>Q3LI66</id>
        <label>KRTAP6-2</label>
    </interactant>
    <organismsDiffer>false</organismsDiffer>
    <experiments>3</experiments>
</comment>
<comment type="interaction">
    <interactant intactId="EBI-9088829">
        <id>Q6DKI2</id>
    </interactant>
    <interactant intactId="EBI-21591415">
        <id>P13473-2</id>
        <label>LAMP2</label>
    </interactant>
    <organismsDiffer>false</organismsDiffer>
    <experiments>3</experiments>
</comment>
<comment type="interaction">
    <interactant intactId="EBI-9088829">
        <id>Q6DKI2</id>
    </interactant>
    <interactant intactId="EBI-713665">
        <id>P19404</id>
        <label>NDUFV2</label>
    </interactant>
    <organismsDiffer>false</organismsDiffer>
    <experiments>3</experiments>
</comment>
<comment type="interaction">
    <interactant intactId="EBI-9088829">
        <id>Q6DKI2</id>
    </interactant>
    <interactant intactId="EBI-1391623">
        <id>P29474</id>
        <label>NOS3</label>
    </interactant>
    <organismsDiffer>false</organismsDiffer>
    <experiments>3</experiments>
</comment>
<comment type="interaction">
    <interactant intactId="EBI-9088829">
        <id>Q6DKI2</id>
    </interactant>
    <interactant intactId="EBI-2811583">
        <id>Q9BVL2</id>
        <label>NUP58</label>
    </interactant>
    <organismsDiffer>false</organismsDiffer>
    <experiments>3</experiments>
</comment>
<comment type="interaction">
    <interactant intactId="EBI-9088829">
        <id>Q6DKI2</id>
    </interactant>
    <interactant intactId="EBI-740019">
        <id>O15162</id>
        <label>PLSCR1</label>
    </interactant>
    <organismsDiffer>false</organismsDiffer>
    <experiments>3</experiments>
</comment>
<comment type="interaction">
    <interactant intactId="EBI-9088829">
        <id>Q6DKI2</id>
    </interactant>
    <interactant intactId="EBI-50433196">
        <id>A0A6Q8PF08</id>
        <label>PMP22</label>
    </interactant>
    <organismsDiffer>false</organismsDiffer>
    <experiments>3</experiments>
</comment>
<comment type="interaction">
    <interactant intactId="EBI-9088829">
        <id>Q6DKI2</id>
    </interactant>
    <interactant intactId="EBI-5280197">
        <id>O75400-2</id>
        <label>PRPF40A</label>
    </interactant>
    <organismsDiffer>false</organismsDiffer>
    <experiments>3</experiments>
</comment>
<comment type="interaction">
    <interactant intactId="EBI-9088829">
        <id>Q6DKI2</id>
    </interactant>
    <interactant intactId="EBI-347462">
        <id>P47897</id>
        <label>QARS1</label>
    </interactant>
    <organismsDiffer>false</organismsDiffer>
    <experiments>3</experiments>
</comment>
<comment type="interaction">
    <interactant intactId="EBI-9088829">
        <id>Q6DKI2</id>
    </interactant>
    <interactant intactId="EBI-740322">
        <id>Q93062</id>
        <label>RBPMS</label>
    </interactant>
    <organismsDiffer>false</organismsDiffer>
    <experiments>3</experiments>
</comment>
<comment type="interaction">
    <interactant intactId="EBI-9088829">
        <id>Q6DKI2</id>
    </interactant>
    <interactant intactId="EBI-2623095">
        <id>Q9Y371</id>
        <label>SH3GLB1</label>
    </interactant>
    <organismsDiffer>false</organismsDiffer>
    <experiments>3</experiments>
</comment>
<comment type="interaction">
    <interactant intactId="EBI-9088829">
        <id>Q6DKI2</id>
    </interactant>
    <interactant intactId="EBI-372899">
        <id>Q13148</id>
        <label>TARDBP</label>
    </interactant>
    <organismsDiffer>false</organismsDiffer>
    <experiments>6</experiments>
</comment>
<comment type="miscellaneous">
    <text>The LGALS9-like proteins are encoded by a duplicated regions on chromosome 17; there are at least 3 genes coding for galectin-9-like proteins.</text>
</comment>
<organism>
    <name type="scientific">Homo sapiens</name>
    <name type="common">Human</name>
    <dbReference type="NCBI Taxonomy" id="9606"/>
    <lineage>
        <taxon>Eukaryota</taxon>
        <taxon>Metazoa</taxon>
        <taxon>Chordata</taxon>
        <taxon>Craniata</taxon>
        <taxon>Vertebrata</taxon>
        <taxon>Euteleostomi</taxon>
        <taxon>Mammalia</taxon>
        <taxon>Eutheria</taxon>
        <taxon>Euarchontoglires</taxon>
        <taxon>Primates</taxon>
        <taxon>Haplorrhini</taxon>
        <taxon>Catarrhini</taxon>
        <taxon>Hominidae</taxon>
        <taxon>Homo</taxon>
    </lineage>
</organism>
<name>LEG9C_HUMAN</name>
<keyword id="KW-0430">Lectin</keyword>
<keyword id="KW-1185">Reference proteome</keyword>
<keyword id="KW-0677">Repeat</keyword>
<feature type="chain" id="PRO_0000332131" description="Galectin-9C">
    <location>
        <begin position="1"/>
        <end position="356"/>
    </location>
</feature>
<feature type="domain" description="Galectin 1" evidence="2">
    <location>
        <begin position="17"/>
        <end position="148"/>
    </location>
</feature>
<feature type="domain" description="Galectin 2" evidence="2">
    <location>
        <begin position="228"/>
        <end position="356"/>
    </location>
</feature>
<feature type="region of interest" description="Disordered" evidence="3">
    <location>
        <begin position="170"/>
        <end position="190"/>
    </location>
</feature>
<feature type="binding site" evidence="1">
    <location>
        <begin position="82"/>
        <end position="88"/>
    </location>
    <ligand>
        <name>a beta-D-galactoside</name>
        <dbReference type="ChEBI" id="CHEBI:28034"/>
        <label>1</label>
    </ligand>
</feature>
<feature type="binding site" evidence="1">
    <location>
        <begin position="288"/>
        <end position="294"/>
    </location>
    <ligand>
        <name>a beta-D-galactoside</name>
        <dbReference type="ChEBI" id="CHEBI:28034"/>
        <label>2</label>
    </ligand>
</feature>
<feature type="sequence variant" id="VAR_056004" description="In dbSNP:rs3907319." evidence="4">
    <original>V</original>
    <variation>M</variation>
    <location>
        <position position="126"/>
    </location>
</feature>
<feature type="sequence conflict" description="In Ref. 1; BAF98709." evidence="5" ref="1">
    <original>T</original>
    <variation>R</variation>
    <location>
        <position position="81"/>
    </location>
</feature>
<feature type="sequence conflict" description="In Ref. 1; BAF98709." evidence="5" ref="1">
    <original>V</original>
    <variation>A</variation>
    <location>
        <position position="153"/>
    </location>
</feature>
<feature type="sequence conflict" description="In Ref. 3; AAH73889." evidence="5" ref="3">
    <original>S</original>
    <variation>I</variation>
    <location>
        <position position="183"/>
    </location>
</feature>
<feature type="sequence conflict" description="In Ref. 1; BAF98709." evidence="5" ref="1">
    <original>S</original>
    <variation>C</variation>
    <location>
        <position position="306"/>
    </location>
</feature>
<gene>
    <name type="primary">LGALS9C</name>
</gene>
<reference key="1">
    <citation type="journal article" date="2004" name="Nat. Genet.">
        <title>Complete sequencing and characterization of 21,243 full-length human cDNAs.</title>
        <authorList>
            <person name="Ota T."/>
            <person name="Suzuki Y."/>
            <person name="Nishikawa T."/>
            <person name="Otsuki T."/>
            <person name="Sugiyama T."/>
            <person name="Irie R."/>
            <person name="Wakamatsu A."/>
            <person name="Hayashi K."/>
            <person name="Sato H."/>
            <person name="Nagai K."/>
            <person name="Kimura K."/>
            <person name="Makita H."/>
            <person name="Sekine M."/>
            <person name="Obayashi M."/>
            <person name="Nishi T."/>
            <person name="Shibahara T."/>
            <person name="Tanaka T."/>
            <person name="Ishii S."/>
            <person name="Yamamoto J."/>
            <person name="Saito K."/>
            <person name="Kawai Y."/>
            <person name="Isono Y."/>
            <person name="Nakamura Y."/>
            <person name="Nagahari K."/>
            <person name="Murakami K."/>
            <person name="Yasuda T."/>
            <person name="Iwayanagi T."/>
            <person name="Wagatsuma M."/>
            <person name="Shiratori A."/>
            <person name="Sudo H."/>
            <person name="Hosoiri T."/>
            <person name="Kaku Y."/>
            <person name="Kodaira H."/>
            <person name="Kondo H."/>
            <person name="Sugawara M."/>
            <person name="Takahashi M."/>
            <person name="Kanda K."/>
            <person name="Yokoi T."/>
            <person name="Furuya T."/>
            <person name="Kikkawa E."/>
            <person name="Omura Y."/>
            <person name="Abe K."/>
            <person name="Kamihara K."/>
            <person name="Katsuta N."/>
            <person name="Sato K."/>
            <person name="Tanikawa M."/>
            <person name="Yamazaki M."/>
            <person name="Ninomiya K."/>
            <person name="Ishibashi T."/>
            <person name="Yamashita H."/>
            <person name="Murakawa K."/>
            <person name="Fujimori K."/>
            <person name="Tanai H."/>
            <person name="Kimata M."/>
            <person name="Watanabe M."/>
            <person name="Hiraoka S."/>
            <person name="Chiba Y."/>
            <person name="Ishida S."/>
            <person name="Ono Y."/>
            <person name="Takiguchi S."/>
            <person name="Watanabe S."/>
            <person name="Yosida M."/>
            <person name="Hotuta T."/>
            <person name="Kusano J."/>
            <person name="Kanehori K."/>
            <person name="Takahashi-Fujii A."/>
            <person name="Hara H."/>
            <person name="Tanase T.-O."/>
            <person name="Nomura Y."/>
            <person name="Togiya S."/>
            <person name="Komai F."/>
            <person name="Hara R."/>
            <person name="Takeuchi K."/>
            <person name="Arita M."/>
            <person name="Imose N."/>
            <person name="Musashino K."/>
            <person name="Yuuki H."/>
            <person name="Oshima A."/>
            <person name="Sasaki N."/>
            <person name="Aotsuka S."/>
            <person name="Yoshikawa Y."/>
            <person name="Matsunawa H."/>
            <person name="Ichihara T."/>
            <person name="Shiohata N."/>
            <person name="Sano S."/>
            <person name="Moriya S."/>
            <person name="Momiyama H."/>
            <person name="Satoh N."/>
            <person name="Takami S."/>
            <person name="Terashima Y."/>
            <person name="Suzuki O."/>
            <person name="Nakagawa S."/>
            <person name="Senoh A."/>
            <person name="Mizoguchi H."/>
            <person name="Goto Y."/>
            <person name="Shimizu F."/>
            <person name="Wakebe H."/>
            <person name="Hishigaki H."/>
            <person name="Watanabe T."/>
            <person name="Sugiyama A."/>
            <person name="Takemoto M."/>
            <person name="Kawakami B."/>
            <person name="Yamazaki M."/>
            <person name="Watanabe K."/>
            <person name="Kumagai A."/>
            <person name="Itakura S."/>
            <person name="Fukuzumi Y."/>
            <person name="Fujimori Y."/>
            <person name="Komiyama M."/>
            <person name="Tashiro H."/>
            <person name="Tanigami A."/>
            <person name="Fujiwara T."/>
            <person name="Ono T."/>
            <person name="Yamada K."/>
            <person name="Fujii Y."/>
            <person name="Ozaki K."/>
            <person name="Hirao M."/>
            <person name="Ohmori Y."/>
            <person name="Kawabata A."/>
            <person name="Hikiji T."/>
            <person name="Kobatake N."/>
            <person name="Inagaki H."/>
            <person name="Ikema Y."/>
            <person name="Okamoto S."/>
            <person name="Okitani R."/>
            <person name="Kawakami T."/>
            <person name="Noguchi S."/>
            <person name="Itoh T."/>
            <person name="Shigeta K."/>
            <person name="Senba T."/>
            <person name="Matsumura K."/>
            <person name="Nakajima Y."/>
            <person name="Mizuno T."/>
            <person name="Morinaga M."/>
            <person name="Sasaki M."/>
            <person name="Togashi T."/>
            <person name="Oyama M."/>
            <person name="Hata H."/>
            <person name="Watanabe M."/>
            <person name="Komatsu T."/>
            <person name="Mizushima-Sugano J."/>
            <person name="Satoh T."/>
            <person name="Shirai Y."/>
            <person name="Takahashi Y."/>
            <person name="Nakagawa K."/>
            <person name="Okumura K."/>
            <person name="Nagase T."/>
            <person name="Nomura N."/>
            <person name="Kikuchi H."/>
            <person name="Masuho Y."/>
            <person name="Yamashita R."/>
            <person name="Nakai K."/>
            <person name="Yada T."/>
            <person name="Nakamura Y."/>
            <person name="Ohara O."/>
            <person name="Isogai T."/>
            <person name="Sugano S."/>
        </authorList>
    </citation>
    <scope>NUCLEOTIDE SEQUENCE [LARGE SCALE MRNA]</scope>
    <scope>VARIANT MET-126</scope>
    <source>
        <tissue>Colon</tissue>
    </source>
</reference>
<reference key="2">
    <citation type="journal article" date="2006" name="Nature">
        <title>DNA sequence of human chromosome 17 and analysis of rearrangement in the human lineage.</title>
        <authorList>
            <person name="Zody M.C."/>
            <person name="Garber M."/>
            <person name="Adams D.J."/>
            <person name="Sharpe T."/>
            <person name="Harrow J."/>
            <person name="Lupski J.R."/>
            <person name="Nicholson C."/>
            <person name="Searle S.M."/>
            <person name="Wilming L."/>
            <person name="Young S.K."/>
            <person name="Abouelleil A."/>
            <person name="Allen N.R."/>
            <person name="Bi W."/>
            <person name="Bloom T."/>
            <person name="Borowsky M.L."/>
            <person name="Bugalter B.E."/>
            <person name="Butler J."/>
            <person name="Chang J.L."/>
            <person name="Chen C.-K."/>
            <person name="Cook A."/>
            <person name="Corum B."/>
            <person name="Cuomo C.A."/>
            <person name="de Jong P.J."/>
            <person name="DeCaprio D."/>
            <person name="Dewar K."/>
            <person name="FitzGerald M."/>
            <person name="Gilbert J."/>
            <person name="Gibson R."/>
            <person name="Gnerre S."/>
            <person name="Goldstein S."/>
            <person name="Grafham D.V."/>
            <person name="Grocock R."/>
            <person name="Hafez N."/>
            <person name="Hagopian D.S."/>
            <person name="Hart E."/>
            <person name="Norman C.H."/>
            <person name="Humphray S."/>
            <person name="Jaffe D.B."/>
            <person name="Jones M."/>
            <person name="Kamal M."/>
            <person name="Khodiyar V.K."/>
            <person name="LaButti K."/>
            <person name="Laird G."/>
            <person name="Lehoczky J."/>
            <person name="Liu X."/>
            <person name="Lokyitsang T."/>
            <person name="Loveland J."/>
            <person name="Lui A."/>
            <person name="Macdonald P."/>
            <person name="Major J.E."/>
            <person name="Matthews L."/>
            <person name="Mauceli E."/>
            <person name="McCarroll S.A."/>
            <person name="Mihalev A.H."/>
            <person name="Mudge J."/>
            <person name="Nguyen C."/>
            <person name="Nicol R."/>
            <person name="O'Leary S.B."/>
            <person name="Osoegawa K."/>
            <person name="Schwartz D.C."/>
            <person name="Shaw-Smith C."/>
            <person name="Stankiewicz P."/>
            <person name="Steward C."/>
            <person name="Swarbreck D."/>
            <person name="Venkataraman V."/>
            <person name="Whittaker C.A."/>
            <person name="Yang X."/>
            <person name="Zimmer A.R."/>
            <person name="Bradley A."/>
            <person name="Hubbard T."/>
            <person name="Birren B.W."/>
            <person name="Rogers J."/>
            <person name="Lander E.S."/>
            <person name="Nusbaum C."/>
        </authorList>
    </citation>
    <scope>NUCLEOTIDE SEQUENCE [LARGE SCALE GENOMIC DNA]</scope>
</reference>
<reference key="3">
    <citation type="journal article" date="2004" name="Genome Res.">
        <title>The status, quality, and expansion of the NIH full-length cDNA project: the Mammalian Gene Collection (MGC).</title>
        <authorList>
            <consortium name="The MGC Project Team"/>
        </authorList>
    </citation>
    <scope>NUCLEOTIDE SEQUENCE [LARGE SCALE MRNA]</scope>
    <source>
        <tissue>Pancreas</tissue>
    </source>
</reference>
<protein>
    <recommendedName>
        <fullName>Galectin-9C</fullName>
        <shortName>Gal-9C</shortName>
    </recommendedName>
    <alternativeName>
        <fullName>Galectin-9-like protein B</fullName>
    </alternativeName>
</protein>
<proteinExistence type="evidence at protein level"/>
<sequence>MAFSGCQAPYLSPAVPFSGTIQGGLQDGFQITVNGAVLSCSGTRFAVDFQTGFSGNDIAFHFNPRFEDGGYVVCNTRQKGTWGPEERKMHMPFQKGMPFDLCFLVQSSDFKVMVNGSLFVQYFHRVPFHRVDTISVNGSVQLSYISFQNPRAVPVQPAFSTVPFSQPVCFPPRPRGRRQKPPSVRPANPAPITQTVIHTVQSASGQMFSQTPAIPPMMYPHPAYPMPFITTIPGGLYPSKSIILSGTVLPSAQRFHINLCSGSHIAFHMNPRFDENAVVRNTQINNSWGSEERSLPRKMPFVRGQSFSVWILCEAHCLKVAVDGQHVFEYYHRLRNLPTINKLEVGGDIQLTHVQT</sequence>